<dbReference type="EMBL" id="BX571857">
    <property type="protein sequence ID" value="CAG42841.1"/>
    <property type="molecule type" value="Genomic_DNA"/>
</dbReference>
<dbReference type="RefSeq" id="WP_001220199.1">
    <property type="nucleotide sequence ID" value="NC_002953.3"/>
</dbReference>
<dbReference type="SMR" id="Q6GA82"/>
<dbReference type="KEGG" id="sas:SAS1067"/>
<dbReference type="HOGENOM" id="CLU_038034_2_3_9"/>
<dbReference type="GO" id="GO:0005886">
    <property type="term" value="C:plasma membrane"/>
    <property type="evidence" value="ECO:0007669"/>
    <property type="project" value="UniProtKB-SubCell"/>
</dbReference>
<dbReference type="GO" id="GO:0020037">
    <property type="term" value="F:heme binding"/>
    <property type="evidence" value="ECO:0007669"/>
    <property type="project" value="InterPro"/>
</dbReference>
<dbReference type="GO" id="GO:0046872">
    <property type="term" value="F:metal ion binding"/>
    <property type="evidence" value="ECO:0007669"/>
    <property type="project" value="UniProtKB-KW"/>
</dbReference>
<dbReference type="GO" id="GO:0071281">
    <property type="term" value="P:cellular response to iron ion"/>
    <property type="evidence" value="ECO:0007669"/>
    <property type="project" value="TreeGrafter"/>
</dbReference>
<dbReference type="GO" id="GO:0015886">
    <property type="term" value="P:heme transport"/>
    <property type="evidence" value="ECO:0007669"/>
    <property type="project" value="InterPro"/>
</dbReference>
<dbReference type="FunFam" id="3.40.50.1980:FF:000022">
    <property type="entry name" value="Heme ABC transporter substrate-binding protein IsdE"/>
    <property type="match status" value="1"/>
</dbReference>
<dbReference type="FunFam" id="3.40.50.1980:FF:000031">
    <property type="entry name" value="High-affinity heme uptake system protein IsdE"/>
    <property type="match status" value="1"/>
</dbReference>
<dbReference type="Gene3D" id="3.40.50.1980">
    <property type="entry name" value="Nitrogenase molybdenum iron protein domain"/>
    <property type="match status" value="2"/>
</dbReference>
<dbReference type="InterPro" id="IPR050902">
    <property type="entry name" value="ABC_Transporter_SBP"/>
</dbReference>
<dbReference type="InterPro" id="IPR019957">
    <property type="entry name" value="ABC_transptr_haem-bd_IsdE"/>
</dbReference>
<dbReference type="InterPro" id="IPR002491">
    <property type="entry name" value="ABC_transptr_periplasmic_BD"/>
</dbReference>
<dbReference type="NCBIfam" id="TIGR03659">
    <property type="entry name" value="IsdE"/>
    <property type="match status" value="1"/>
</dbReference>
<dbReference type="PANTHER" id="PTHR30535:SF36">
    <property type="entry name" value="HIGH-AFFINITY HEME UPTAKE SYSTEM PROTEIN ISDE"/>
    <property type="match status" value="1"/>
</dbReference>
<dbReference type="PANTHER" id="PTHR30535">
    <property type="entry name" value="VITAMIN B12-BINDING PROTEIN"/>
    <property type="match status" value="1"/>
</dbReference>
<dbReference type="Pfam" id="PF01497">
    <property type="entry name" value="Peripla_BP_2"/>
    <property type="match status" value="1"/>
</dbReference>
<dbReference type="SUPFAM" id="SSF53807">
    <property type="entry name" value="Helical backbone' metal receptor"/>
    <property type="match status" value="1"/>
</dbReference>
<dbReference type="PROSITE" id="PS50983">
    <property type="entry name" value="FE_B12_PBP"/>
    <property type="match status" value="1"/>
</dbReference>
<dbReference type="PROSITE" id="PS51257">
    <property type="entry name" value="PROKAR_LIPOPROTEIN"/>
    <property type="match status" value="1"/>
</dbReference>
<gene>
    <name type="primary">isdE</name>
    <name type="synonym">sirF</name>
    <name type="ordered locus">SAS1067</name>
</gene>
<reference key="1">
    <citation type="journal article" date="2004" name="Proc. Natl. Acad. Sci. U.S.A.">
        <title>Complete genomes of two clinical Staphylococcus aureus strains: evidence for the rapid evolution of virulence and drug resistance.</title>
        <authorList>
            <person name="Holden M.T.G."/>
            <person name="Feil E.J."/>
            <person name="Lindsay J.A."/>
            <person name="Peacock S.J."/>
            <person name="Day N.P.J."/>
            <person name="Enright M.C."/>
            <person name="Foster T.J."/>
            <person name="Moore C.E."/>
            <person name="Hurst L."/>
            <person name="Atkin R."/>
            <person name="Barron A."/>
            <person name="Bason N."/>
            <person name="Bentley S.D."/>
            <person name="Chillingworth C."/>
            <person name="Chillingworth T."/>
            <person name="Churcher C."/>
            <person name="Clark L."/>
            <person name="Corton C."/>
            <person name="Cronin A."/>
            <person name="Doggett J."/>
            <person name="Dowd L."/>
            <person name="Feltwell T."/>
            <person name="Hance Z."/>
            <person name="Harris B."/>
            <person name="Hauser H."/>
            <person name="Holroyd S."/>
            <person name="Jagels K."/>
            <person name="James K.D."/>
            <person name="Lennard N."/>
            <person name="Line A."/>
            <person name="Mayes R."/>
            <person name="Moule S."/>
            <person name="Mungall K."/>
            <person name="Ormond D."/>
            <person name="Quail M.A."/>
            <person name="Rabbinowitsch E."/>
            <person name="Rutherford K.M."/>
            <person name="Sanders M."/>
            <person name="Sharp S."/>
            <person name="Simmonds M."/>
            <person name="Stevens K."/>
            <person name="Whitehead S."/>
            <person name="Barrell B.G."/>
            <person name="Spratt B.G."/>
            <person name="Parkhill J."/>
        </authorList>
    </citation>
    <scope>NUCLEOTIDE SEQUENCE [LARGE SCALE GENOMIC DNA]</scope>
    <source>
        <strain>MSSA476</strain>
    </source>
</reference>
<organism>
    <name type="scientific">Staphylococcus aureus (strain MSSA476)</name>
    <dbReference type="NCBI Taxonomy" id="282459"/>
    <lineage>
        <taxon>Bacteria</taxon>
        <taxon>Bacillati</taxon>
        <taxon>Bacillota</taxon>
        <taxon>Bacilli</taxon>
        <taxon>Bacillales</taxon>
        <taxon>Staphylococcaceae</taxon>
        <taxon>Staphylococcus</taxon>
    </lineage>
</organism>
<proteinExistence type="inferred from homology"/>
<comment type="function">
    <text evidence="1">Involved in heme (porphyrin) scavenging. Binds Fe(2+) and Fe(3+) heme but the largest fraction is Fe(2+) heme. Functions as a high-affinity heme binding protein and probably has a role in relaying heme-iron from cell wall-anchored isd proteins receptors to the probable permease IsdF (By similarity).</text>
</comment>
<comment type="cofactor">
    <cofactor evidence="1">
        <name>heme b</name>
        <dbReference type="ChEBI" id="CHEBI:60344"/>
    </cofactor>
    <text evidence="1">Binds 1 heme b (iron(II)-protoporphyrin IX) group per subunit.</text>
</comment>
<comment type="subcellular location">
    <subcellularLocation>
        <location evidence="2">Cell membrane</location>
        <topology evidence="2">Lipid-anchor</topology>
    </subcellularLocation>
</comment>
<comment type="induction">
    <text evidence="1">Repressed by fur in the presence of iron.</text>
</comment>
<comment type="similarity">
    <text evidence="4">Belongs to the bacterial solute-binding protein 8 family.</text>
</comment>
<accession>Q6GA82</accession>
<protein>
    <recommendedName>
        <fullName>High-affinity heme uptake system protein IsdE</fullName>
    </recommendedName>
    <alternativeName>
        <fullName>Iron-regulated surface determinant protein E</fullName>
    </alternativeName>
    <alternativeName>
        <fullName>Staphylococcal iron-regulated protein F</fullName>
    </alternativeName>
</protein>
<sequence length="292" mass="33271">MRIIKYLTILVISVVILTSCQSSSSQESTKSGEFRIVPTTVALTMTLDKLDLPIVGKPTSYKTLPNRYKDVPEIGQPMEPNVEAVKKLKPTHVLSVSTIKDEMQPFYKQLNMKGYFYDFDSLKGMQKSITQLGDQFNRKAQAKELNDHLNSVKQKIENKAAKQKKHPKVLILMGVPGSYLVATDKSYIGDLVKIAGGENVIKVKDRQYISSNTENLLNINPDIILRLPHGMPEEVKKMFQKEFKQNDIWKHFKAVKNNHVYDLEEVPFGITANVDADKAMTQLYDLFYKDKK</sequence>
<evidence type="ECO:0000250" key="1"/>
<evidence type="ECO:0000255" key="2">
    <source>
        <dbReference type="PROSITE-ProRule" id="PRU00303"/>
    </source>
</evidence>
<evidence type="ECO:0000255" key="3">
    <source>
        <dbReference type="PROSITE-ProRule" id="PRU00344"/>
    </source>
</evidence>
<evidence type="ECO:0000305" key="4"/>
<name>ISDE_STAAS</name>
<feature type="signal peptide" evidence="2">
    <location>
        <begin position="1"/>
        <end position="19"/>
    </location>
</feature>
<feature type="chain" id="PRO_0000326210" description="High-affinity heme uptake system protein IsdE">
    <location>
        <begin position="20"/>
        <end position="292"/>
    </location>
</feature>
<feature type="domain" description="Fe/B12 periplasmic-binding" evidence="3">
    <location>
        <begin position="35"/>
        <end position="291"/>
    </location>
</feature>
<feature type="binding site" evidence="1">
    <location>
        <position position="41"/>
    </location>
    <ligand>
        <name>heme</name>
        <dbReference type="ChEBI" id="CHEBI:30413"/>
    </ligand>
</feature>
<feature type="binding site" evidence="1">
    <location>
        <position position="42"/>
    </location>
    <ligand>
        <name>heme</name>
        <dbReference type="ChEBI" id="CHEBI:30413"/>
    </ligand>
</feature>
<feature type="binding site" evidence="1">
    <location>
        <position position="60"/>
    </location>
    <ligand>
        <name>heme</name>
        <dbReference type="ChEBI" id="CHEBI:30413"/>
    </ligand>
</feature>
<feature type="binding site" evidence="1">
    <location>
        <position position="61"/>
    </location>
    <ligand>
        <name>heme</name>
        <dbReference type="ChEBI" id="CHEBI:30413"/>
    </ligand>
</feature>
<feature type="binding site" description="axial binding residue" evidence="1">
    <location>
        <position position="78"/>
    </location>
    <ligand>
        <name>heme</name>
        <dbReference type="ChEBI" id="CHEBI:30413"/>
    </ligand>
    <ligandPart>
        <name>Fe</name>
        <dbReference type="ChEBI" id="CHEBI:18248"/>
    </ligandPart>
</feature>
<feature type="binding site" description="axial binding residue" evidence="1">
    <location>
        <position position="229"/>
    </location>
    <ligand>
        <name>heme</name>
        <dbReference type="ChEBI" id="CHEBI:30413"/>
    </ligand>
    <ligandPart>
        <name>Fe</name>
        <dbReference type="ChEBI" id="CHEBI:18248"/>
    </ligandPart>
</feature>
<feature type="lipid moiety-binding region" description="N-palmitoyl cysteine" evidence="2">
    <location>
        <position position="20"/>
    </location>
</feature>
<feature type="lipid moiety-binding region" description="S-diacylglycerol cysteine" evidence="2">
    <location>
        <position position="20"/>
    </location>
</feature>
<keyword id="KW-1003">Cell membrane</keyword>
<keyword id="KW-0349">Heme</keyword>
<keyword id="KW-0408">Iron</keyword>
<keyword id="KW-0449">Lipoprotein</keyword>
<keyword id="KW-0472">Membrane</keyword>
<keyword id="KW-0479">Metal-binding</keyword>
<keyword id="KW-0564">Palmitate</keyword>
<keyword id="KW-0732">Signal</keyword>
<keyword id="KW-0813">Transport</keyword>